<reference key="1">
    <citation type="journal article" date="2005" name="Nat. Genet.">
        <title>The complete genome sequence of Francisella tularensis, the causative agent of tularemia.</title>
        <authorList>
            <person name="Larsson P."/>
            <person name="Oyston P.C.F."/>
            <person name="Chain P."/>
            <person name="Chu M.C."/>
            <person name="Duffield M."/>
            <person name="Fuxelius H.-H."/>
            <person name="Garcia E."/>
            <person name="Haelltorp G."/>
            <person name="Johansson D."/>
            <person name="Isherwood K.E."/>
            <person name="Karp P.D."/>
            <person name="Larsson E."/>
            <person name="Liu Y."/>
            <person name="Michell S."/>
            <person name="Prior J."/>
            <person name="Prior R."/>
            <person name="Malfatti S."/>
            <person name="Sjoestedt A."/>
            <person name="Svensson K."/>
            <person name="Thompson N."/>
            <person name="Vergez L."/>
            <person name="Wagg J.K."/>
            <person name="Wren B.W."/>
            <person name="Lindler L.E."/>
            <person name="Andersson S.G.E."/>
            <person name="Forsman M."/>
            <person name="Titball R.W."/>
        </authorList>
    </citation>
    <scope>NUCLEOTIDE SEQUENCE [LARGE SCALE GENOMIC DNA]</scope>
    <source>
        <strain>SCHU S4 / Schu 4</strain>
    </source>
</reference>
<feature type="chain" id="PRO_0000225965" description="Chaperone protein DnaK">
    <location>
        <begin position="1"/>
        <end position="642"/>
    </location>
</feature>
<feature type="region of interest" description="Disordered" evidence="2">
    <location>
        <begin position="615"/>
        <end position="642"/>
    </location>
</feature>
<feature type="compositionally biased region" description="Acidic residues" evidence="2">
    <location>
        <begin position="628"/>
        <end position="642"/>
    </location>
</feature>
<feature type="modified residue" description="Phosphothreonine; by autocatalysis" evidence="1">
    <location>
        <position position="201"/>
    </location>
</feature>
<keyword id="KW-0067">ATP-binding</keyword>
<keyword id="KW-0143">Chaperone</keyword>
<keyword id="KW-0547">Nucleotide-binding</keyword>
<keyword id="KW-0597">Phosphoprotein</keyword>
<keyword id="KW-1185">Reference proteome</keyword>
<keyword id="KW-0346">Stress response</keyword>
<name>DNAK_FRATT</name>
<gene>
    <name evidence="1" type="primary">dnaK</name>
    <name type="ordered locus">FTT_1269c</name>
</gene>
<dbReference type="EMBL" id="AJ749949">
    <property type="protein sequence ID" value="CAG45902.1"/>
    <property type="molecule type" value="Genomic_DNA"/>
</dbReference>
<dbReference type="RefSeq" id="WP_003021930.1">
    <property type="nucleotide sequence ID" value="NC_006570.2"/>
</dbReference>
<dbReference type="RefSeq" id="YP_170225.1">
    <property type="nucleotide sequence ID" value="NC_006570.2"/>
</dbReference>
<dbReference type="SMR" id="Q5NFG7"/>
<dbReference type="STRING" id="177416.FTT_1269c"/>
<dbReference type="DNASU" id="3191531"/>
<dbReference type="EnsemblBacteria" id="CAG45902">
    <property type="protein sequence ID" value="CAG45902"/>
    <property type="gene ID" value="FTT_1269c"/>
</dbReference>
<dbReference type="KEGG" id="ftu:FTT_1269c"/>
<dbReference type="eggNOG" id="COG0443">
    <property type="taxonomic scope" value="Bacteria"/>
</dbReference>
<dbReference type="OrthoDB" id="9766019at2"/>
<dbReference type="Proteomes" id="UP000001174">
    <property type="component" value="Chromosome"/>
</dbReference>
<dbReference type="GO" id="GO:0005524">
    <property type="term" value="F:ATP binding"/>
    <property type="evidence" value="ECO:0007669"/>
    <property type="project" value="UniProtKB-UniRule"/>
</dbReference>
<dbReference type="GO" id="GO:0140662">
    <property type="term" value="F:ATP-dependent protein folding chaperone"/>
    <property type="evidence" value="ECO:0007669"/>
    <property type="project" value="InterPro"/>
</dbReference>
<dbReference type="GO" id="GO:0051082">
    <property type="term" value="F:unfolded protein binding"/>
    <property type="evidence" value="ECO:0007669"/>
    <property type="project" value="InterPro"/>
</dbReference>
<dbReference type="CDD" id="cd10234">
    <property type="entry name" value="ASKHA_NBD_HSP70_DnaK-like"/>
    <property type="match status" value="1"/>
</dbReference>
<dbReference type="FunFam" id="2.60.34.10:FF:000014">
    <property type="entry name" value="Chaperone protein DnaK HSP70"/>
    <property type="match status" value="1"/>
</dbReference>
<dbReference type="FunFam" id="1.20.1270.10:FF:000001">
    <property type="entry name" value="Molecular chaperone DnaK"/>
    <property type="match status" value="1"/>
</dbReference>
<dbReference type="FunFam" id="3.30.420.40:FF:000004">
    <property type="entry name" value="Molecular chaperone DnaK"/>
    <property type="match status" value="1"/>
</dbReference>
<dbReference type="FunFam" id="3.90.640.10:FF:000003">
    <property type="entry name" value="Molecular chaperone DnaK"/>
    <property type="match status" value="1"/>
</dbReference>
<dbReference type="Gene3D" id="1.20.1270.10">
    <property type="match status" value="1"/>
</dbReference>
<dbReference type="Gene3D" id="3.30.420.40">
    <property type="match status" value="2"/>
</dbReference>
<dbReference type="Gene3D" id="3.90.640.10">
    <property type="entry name" value="Actin, Chain A, domain 4"/>
    <property type="match status" value="1"/>
</dbReference>
<dbReference type="Gene3D" id="2.60.34.10">
    <property type="entry name" value="Substrate Binding Domain Of DNAk, Chain A, domain 1"/>
    <property type="match status" value="1"/>
</dbReference>
<dbReference type="HAMAP" id="MF_00332">
    <property type="entry name" value="DnaK"/>
    <property type="match status" value="1"/>
</dbReference>
<dbReference type="InterPro" id="IPR043129">
    <property type="entry name" value="ATPase_NBD"/>
</dbReference>
<dbReference type="InterPro" id="IPR012725">
    <property type="entry name" value="Chaperone_DnaK"/>
</dbReference>
<dbReference type="InterPro" id="IPR018181">
    <property type="entry name" value="Heat_shock_70_CS"/>
</dbReference>
<dbReference type="InterPro" id="IPR029048">
    <property type="entry name" value="HSP70_C_sf"/>
</dbReference>
<dbReference type="InterPro" id="IPR029047">
    <property type="entry name" value="HSP70_peptide-bd_sf"/>
</dbReference>
<dbReference type="InterPro" id="IPR013126">
    <property type="entry name" value="Hsp_70_fam"/>
</dbReference>
<dbReference type="NCBIfam" id="NF001413">
    <property type="entry name" value="PRK00290.1"/>
    <property type="match status" value="1"/>
</dbReference>
<dbReference type="NCBIfam" id="NF003520">
    <property type="entry name" value="PRK05183.1"/>
    <property type="match status" value="1"/>
</dbReference>
<dbReference type="NCBIfam" id="TIGR02350">
    <property type="entry name" value="prok_dnaK"/>
    <property type="match status" value="1"/>
</dbReference>
<dbReference type="PANTHER" id="PTHR19375">
    <property type="entry name" value="HEAT SHOCK PROTEIN 70KDA"/>
    <property type="match status" value="1"/>
</dbReference>
<dbReference type="Pfam" id="PF00012">
    <property type="entry name" value="HSP70"/>
    <property type="match status" value="1"/>
</dbReference>
<dbReference type="PRINTS" id="PR00301">
    <property type="entry name" value="HEATSHOCK70"/>
</dbReference>
<dbReference type="SUPFAM" id="SSF53067">
    <property type="entry name" value="Actin-like ATPase domain"/>
    <property type="match status" value="2"/>
</dbReference>
<dbReference type="SUPFAM" id="SSF100934">
    <property type="entry name" value="Heat shock protein 70kD (HSP70), C-terminal subdomain"/>
    <property type="match status" value="1"/>
</dbReference>
<dbReference type="SUPFAM" id="SSF100920">
    <property type="entry name" value="Heat shock protein 70kD (HSP70), peptide-binding domain"/>
    <property type="match status" value="1"/>
</dbReference>
<dbReference type="PROSITE" id="PS00297">
    <property type="entry name" value="HSP70_1"/>
    <property type="match status" value="1"/>
</dbReference>
<dbReference type="PROSITE" id="PS00329">
    <property type="entry name" value="HSP70_2"/>
    <property type="match status" value="1"/>
</dbReference>
<dbReference type="PROSITE" id="PS01036">
    <property type="entry name" value="HSP70_3"/>
    <property type="match status" value="1"/>
</dbReference>
<organism>
    <name type="scientific">Francisella tularensis subsp. tularensis (strain SCHU S4 / Schu 4)</name>
    <dbReference type="NCBI Taxonomy" id="177416"/>
    <lineage>
        <taxon>Bacteria</taxon>
        <taxon>Pseudomonadati</taxon>
        <taxon>Pseudomonadota</taxon>
        <taxon>Gammaproteobacteria</taxon>
        <taxon>Thiotrichales</taxon>
        <taxon>Francisellaceae</taxon>
        <taxon>Francisella</taxon>
    </lineage>
</organism>
<evidence type="ECO:0000255" key="1">
    <source>
        <dbReference type="HAMAP-Rule" id="MF_00332"/>
    </source>
</evidence>
<evidence type="ECO:0000256" key="2">
    <source>
        <dbReference type="SAM" id="MobiDB-lite"/>
    </source>
</evidence>
<sequence length="642" mass="69254">MGKIIGIDLGTTNSCLAIMDGKTAKVIENAEGHRTTPSVVAYTDSGEILVGQAAKRQAVTNPDNTFFAIKRLIGRKYDDKAVQEDIKKKVPYAVIKADNGDAWVATKEGKKMAPPQVSAEVLRKMKKTAEDYLGEPVTEAVITVPAYFNDSQRQATKDAGKIAGLEVKRIINEPTAAALAYGVDSKKGEQTVAVYDLGGGTFDISIIEIADVDGDNQIEVLSTNGDTFLGGEDFDLALMNYLIDEFKKEQGIDLHNDKLALQRVREAAEKAKVELSSAQQTDVNLPYITADATGPKHLNIKVTRAKFESLVSDLVMRSLEPCKKALEDAGLSKSDITEVLLVGGQTRMPLVQEKVKEFFGKEPRKDVNPDEAVAVGAAIQGGVLAGDVKDILLLDVTPLSLGIETMGGVMTKLIERNTTIPTKKSQVFSTAEDNQPAVTIHVLQGEREMASANKSLGRFDLADIPPAPRGMPQIEVTFDIDANGILNVSAKDKATGKEQNIVIKSSSGLSEEDIEKMVQDAEANAEADKKFHDLVTARNTADNLIHSSRKAIQELGDKVTAAEKEKIEEACKELEAATKGDDKQAIESKTKALEEAFAPIAQKAYAEQAQAAVAQGGAKAEEPKKEEDVVDADFEDVEDDKK</sequence>
<proteinExistence type="inferred from homology"/>
<comment type="function">
    <text evidence="1">Acts as a chaperone.</text>
</comment>
<comment type="induction">
    <text evidence="1">By stress conditions e.g. heat shock.</text>
</comment>
<comment type="similarity">
    <text evidence="1">Belongs to the heat shock protein 70 family.</text>
</comment>
<protein>
    <recommendedName>
        <fullName evidence="1">Chaperone protein DnaK</fullName>
    </recommendedName>
    <alternativeName>
        <fullName evidence="1">HSP70</fullName>
    </alternativeName>
    <alternativeName>
        <fullName evidence="1">Heat shock 70 kDa protein</fullName>
    </alternativeName>
    <alternativeName>
        <fullName evidence="1">Heat shock protein 70</fullName>
    </alternativeName>
</protein>
<accession>Q5NFG7</accession>